<keyword id="KW-0002">3D-structure</keyword>
<keyword id="KW-0044">Antibiotic</keyword>
<keyword id="KW-0929">Antimicrobial</keyword>
<keyword id="KW-0165">Cleavage on pair of basic residues</keyword>
<keyword id="KW-0211">Defensin</keyword>
<keyword id="KW-0903">Direct protein sequencing</keyword>
<keyword id="KW-1015">Disulfide bond</keyword>
<keyword id="KW-0295">Fungicide</keyword>
<keyword id="KW-0964">Secreted</keyword>
<keyword id="KW-0732">Signal</keyword>
<proteinExistence type="evidence at protein level"/>
<sequence length="117" mass="13087">MKGNIGIAVFYMLLLLLPTDSIGKKMEEEQEKLFRQKRNPLIPAIYIGATVGPSVWAYLVALVGAAAVTAANIRRASSDNHSCAGNRGWCRSKCFRHEYVDTYYSAVCGRYFCCRSR</sequence>
<accession>P80957</accession>
<dbReference type="PIR" id="PC1319">
    <property type="entry name" value="PC1319"/>
</dbReference>
<dbReference type="PDB" id="2RNG">
    <property type="method" value="NMR"/>
    <property type="chains" value="A=39-117"/>
</dbReference>
<dbReference type="PDB" id="2RQ2">
    <property type="method" value="NMR"/>
    <property type="chains" value="A=43-72"/>
</dbReference>
<dbReference type="PDBsum" id="2RNG"/>
<dbReference type="PDBsum" id="2RQ2"/>
<dbReference type="BMRB" id="P80957"/>
<dbReference type="SMR" id="P80957"/>
<dbReference type="TCDB" id="1.C.45.5.2">
    <property type="family name" value="the plant defensin (plant defensin) family"/>
</dbReference>
<dbReference type="EvolutionaryTrace" id="P80957"/>
<dbReference type="GO" id="GO:0005576">
    <property type="term" value="C:extracellular region"/>
    <property type="evidence" value="ECO:0000314"/>
    <property type="project" value="UniProtKB"/>
</dbReference>
<dbReference type="GO" id="GO:0050832">
    <property type="term" value="P:defense response to fungus"/>
    <property type="evidence" value="ECO:0000315"/>
    <property type="project" value="UniProtKB"/>
</dbReference>
<dbReference type="GO" id="GO:0050829">
    <property type="term" value="P:defense response to Gram-negative bacterium"/>
    <property type="evidence" value="ECO:0000315"/>
    <property type="project" value="UniProtKB"/>
</dbReference>
<dbReference type="GO" id="GO:0050830">
    <property type="term" value="P:defense response to Gram-positive bacterium"/>
    <property type="evidence" value="ECO:0000315"/>
    <property type="project" value="UniProtKB"/>
</dbReference>
<dbReference type="GO" id="GO:0031640">
    <property type="term" value="P:killing of cells of another organism"/>
    <property type="evidence" value="ECO:0007669"/>
    <property type="project" value="UniProtKB-KW"/>
</dbReference>
<dbReference type="FunFam" id="2.20.20.10:FF:000002">
    <property type="entry name" value="Big defensin"/>
    <property type="match status" value="1"/>
</dbReference>
<dbReference type="FunFam" id="3.40.1620.80:FF:000001">
    <property type="entry name" value="Big defensin"/>
    <property type="match status" value="1"/>
</dbReference>
<dbReference type="Gene3D" id="2.20.20.10">
    <property type="entry name" value="Anthopleurin-A"/>
    <property type="match status" value="1"/>
</dbReference>
<dbReference type="Gene3D" id="3.40.1620.80">
    <property type="entry name" value="Big defensin, N-terminal domain"/>
    <property type="match status" value="1"/>
</dbReference>
<dbReference type="InterPro" id="IPR028060">
    <property type="entry name" value="Defensin_big_dom"/>
</dbReference>
<dbReference type="InterPro" id="IPR042033">
    <property type="entry name" value="Defensin_big_N"/>
</dbReference>
<dbReference type="InterPro" id="IPR023355">
    <property type="entry name" value="Myo_ane_neurotoxin_sf"/>
</dbReference>
<dbReference type="Pfam" id="PF14862">
    <property type="entry name" value="Defensin_big"/>
    <property type="match status" value="1"/>
</dbReference>
<feature type="signal peptide" evidence="1">
    <location>
        <begin position="1"/>
        <end position="23"/>
    </location>
</feature>
<feature type="propeptide" id="PRO_0000379923">
    <location>
        <begin position="26"/>
        <end position="36"/>
    </location>
</feature>
<feature type="chain" id="PRO_0000127109" description="Big defensin">
    <location>
        <begin position="39"/>
        <end position="117"/>
    </location>
</feature>
<feature type="disulfide bond" evidence="3">
    <location>
        <begin position="83"/>
        <end position="113"/>
    </location>
</feature>
<feature type="disulfide bond" evidence="3">
    <location>
        <begin position="90"/>
        <end position="108"/>
    </location>
</feature>
<feature type="disulfide bond" evidence="3">
    <location>
        <begin position="94"/>
        <end position="114"/>
    </location>
</feature>
<feature type="turn" evidence="7">
    <location>
        <begin position="45"/>
        <end position="48"/>
    </location>
</feature>
<feature type="strand" evidence="7">
    <location>
        <begin position="49"/>
        <end position="51"/>
    </location>
</feature>
<feature type="helix" evidence="7">
    <location>
        <begin position="53"/>
        <end position="62"/>
    </location>
</feature>
<feature type="helix" evidence="7">
    <location>
        <begin position="65"/>
        <end position="70"/>
    </location>
</feature>
<feature type="strand" evidence="7">
    <location>
        <begin position="73"/>
        <end position="75"/>
    </location>
</feature>
<feature type="strand" evidence="7">
    <location>
        <begin position="77"/>
        <end position="79"/>
    </location>
</feature>
<feature type="turn" evidence="7">
    <location>
        <begin position="84"/>
        <end position="87"/>
    </location>
</feature>
<feature type="strand" evidence="7">
    <location>
        <begin position="88"/>
        <end position="93"/>
    </location>
</feature>
<feature type="turn" evidence="7">
    <location>
        <begin position="102"/>
        <end position="104"/>
    </location>
</feature>
<feature type="helix" evidence="7">
    <location>
        <begin position="105"/>
        <end position="108"/>
    </location>
</feature>
<feature type="strand" evidence="7">
    <location>
        <begin position="110"/>
        <end position="115"/>
    </location>
</feature>
<protein>
    <recommendedName>
        <fullName>Big defensin</fullName>
    </recommendedName>
</protein>
<reference key="1">
    <citation type="journal article" date="1997" name="Biol. Chem.">
        <title>cDNA cloning, tissue distribution, and subcellular localization of horseshoe crab big defensin.</title>
        <authorList>
            <person name="Kawabata S."/>
            <person name="Saito T."/>
            <person name="Saeki K."/>
            <person name="Okino N."/>
            <person name="Mizutani A."/>
            <person name="Toh Y."/>
            <person name="Iwanaga S."/>
        </authorList>
    </citation>
    <scope>NUCLEOTIDE SEQUENCE [MRNA]</scope>
    <scope>SUBCELLULAR LOCATION</scope>
    <scope>TISSUE SPECIFICITY</scope>
    <source>
        <tissue>Hemocyte</tissue>
    </source>
</reference>
<reference key="2">
    <citation type="journal article" date="1995" name="J. Biochem.">
        <title>A novel big defensin identified in horseshoe crab hemocytes: isolation, amino acid sequence, and antibacterial activity.</title>
        <authorList>
            <person name="Saito T."/>
            <person name="Kawabata S."/>
            <person name="Shingenaga T."/>
            <person name="Takayenoki Y."/>
            <person name="Cho J."/>
            <person name="Nakajima H."/>
            <person name="Hirata M."/>
            <person name="Iwanaga S."/>
        </authorList>
    </citation>
    <scope>PROTEIN SEQUENCE OF 39-117</scope>
    <scope>FUNCTION</scope>
    <scope>SUBCELLULAR LOCATION</scope>
    <scope>TISSUE SPECIFICITY</scope>
    <scope>DISULFIDE BONDS</scope>
    <source>
        <tissue>Hemocyte</tissue>
    </source>
</reference>
<reference key="3">
    <citation type="journal article" date="1993" name="J. Biochem.">
        <title>Separation of large and small granules from horseshoe crab (Tachypleus tridentatus) hemocytes and characterization of their components.</title>
        <authorList>
            <person name="Shigenaga T."/>
            <person name="Takayenoki Y."/>
            <person name="Kawasaki S."/>
            <person name="Seki N."/>
            <person name="Muta T."/>
            <person name="Toh Y."/>
            <person name="Ito A."/>
            <person name="Iwanaga S."/>
        </authorList>
    </citation>
    <scope>PROTEIN SEQUENCE OF 39-72</scope>
    <scope>SUBCELLULAR LOCATION</scope>
    <scope>TISSUE SPECIFICITY</scope>
    <source>
        <tissue>Hemolymph</tissue>
    </source>
</reference>
<reference key="4">
    <citation type="journal article" date="1996" name="J. Biol. Chem.">
        <title>Limulus intracellular coagulation inhibitor type 3. Purification, characterization, cDNA cloning, and tissue localization.</title>
        <authorList>
            <person name="Agarwala K.L."/>
            <person name="Kawabata S."/>
            <person name="Miura Y."/>
            <person name="Kuroki Y."/>
            <person name="Iwanaga S."/>
        </authorList>
    </citation>
    <scope>INTERACTION WITH LICI-1</scope>
</reference>
<reference key="5">
    <citation type="journal article" date="2008" name="Biochemistry">
        <title>A novel beta-defensin structure: a potential strategy of big defensin for overcoming resistance by Gram-positive bacteria.</title>
        <authorList>
            <person name="Kouno T."/>
            <person name="Fujitani N."/>
            <person name="Mizuguchi M."/>
            <person name="Osaki T."/>
            <person name="Nishimura S."/>
            <person name="Kawabata S."/>
            <person name="Aizawa T."/>
            <person name="Demura M."/>
            <person name="Nitta K."/>
            <person name="Kawano K."/>
        </authorList>
    </citation>
    <scope>STRUCTURE BY NMR OF 39-117</scope>
</reference>
<evidence type="ECO:0000255" key="1"/>
<evidence type="ECO:0000269" key="2">
    <source>
    </source>
</evidence>
<evidence type="ECO:0000269" key="3">
    <source>
    </source>
</evidence>
<evidence type="ECO:0000269" key="4">
    <source>
    </source>
</evidence>
<evidence type="ECO:0000269" key="5">
    <source>
    </source>
</evidence>
<evidence type="ECO:0000305" key="6"/>
<evidence type="ECO:0007829" key="7">
    <source>
        <dbReference type="PDB" id="2RNG"/>
    </source>
</evidence>
<organism>
    <name type="scientific">Tachypleus tridentatus</name>
    <name type="common">Japanese horseshoe crab</name>
    <dbReference type="NCBI Taxonomy" id="6853"/>
    <lineage>
        <taxon>Eukaryota</taxon>
        <taxon>Metazoa</taxon>
        <taxon>Ecdysozoa</taxon>
        <taxon>Arthropoda</taxon>
        <taxon>Chelicerata</taxon>
        <taxon>Merostomata</taxon>
        <taxon>Xiphosura</taxon>
        <taxon>Limulidae</taxon>
        <taxon>Tachypleus</taxon>
    </lineage>
</organism>
<comment type="function">
    <text evidence="3">Significantly inhibits the growth of Gram-negative and Gram-positive bacteria and fungi in vitro.</text>
</comment>
<comment type="subunit">
    <text evidence="4">Interacts with intracellular coagulation inhibitor 1/LICI-1.</text>
</comment>
<comment type="subcellular location">
    <subcellularLocation>
        <location evidence="2 3 5">Secreted</location>
    </subcellularLocation>
    <text>L- and S-granules.</text>
</comment>
<comment type="tissue specificity">
    <text evidence="2 3 5">Expressed in all tissues examined, including hemocytes, heart, hepatopancreas, stomach, intestine and skeletal muscle.</text>
</comment>
<comment type="similarity">
    <text evidence="6">Belongs to the big defensin family.</text>
</comment>
<name>BDEF_TACTR</name>